<dbReference type="EMBL" id="AY335490">
    <property type="protein sequence ID" value="AAR01260.1"/>
    <property type="molecule type" value="mRNA"/>
</dbReference>
<dbReference type="EMBL" id="AY335491">
    <property type="protein sequence ID" value="AAR01261.1"/>
    <property type="molecule type" value="mRNA"/>
</dbReference>
<dbReference type="EMBL" id="AY335492">
    <property type="protein sequence ID" value="AAR01262.1"/>
    <property type="molecule type" value="mRNA"/>
</dbReference>
<dbReference type="EMBL" id="AL136565">
    <property type="protein sequence ID" value="CAB66500.2"/>
    <property type="molecule type" value="mRNA"/>
</dbReference>
<dbReference type="EMBL" id="BX537764">
    <property type="protein sequence ID" value="CAD97829.1"/>
    <property type="status" value="ALT_INIT"/>
    <property type="molecule type" value="mRNA"/>
</dbReference>
<dbReference type="EMBL" id="BX648043">
    <property type="protein sequence ID" value="CAH10549.1"/>
    <property type="status" value="ALT_TERM"/>
    <property type="molecule type" value="mRNA"/>
</dbReference>
<dbReference type="EMBL" id="AL139128">
    <property type="status" value="NOT_ANNOTATED_CDS"/>
    <property type="molecule type" value="Genomic_DNA"/>
</dbReference>
<dbReference type="EMBL" id="AL162734">
    <property type="status" value="NOT_ANNOTATED_CDS"/>
    <property type="molecule type" value="Genomic_DNA"/>
</dbReference>
<dbReference type="EMBL" id="CH471121">
    <property type="protein sequence ID" value="EAW53029.1"/>
    <property type="molecule type" value="Genomic_DNA"/>
</dbReference>
<dbReference type="EMBL" id="CH471121">
    <property type="protein sequence ID" value="EAW53030.1"/>
    <property type="molecule type" value="Genomic_DNA"/>
</dbReference>
<dbReference type="EMBL" id="BC036740">
    <property type="protein sequence ID" value="AAH36740.2"/>
    <property type="molecule type" value="mRNA"/>
</dbReference>
<dbReference type="EMBL" id="BC064933">
    <property type="protein sequence ID" value="AAH64933.1"/>
    <property type="molecule type" value="mRNA"/>
</dbReference>
<dbReference type="EMBL" id="BC114629">
    <property type="protein sequence ID" value="AAI14630.1"/>
    <property type="molecule type" value="mRNA"/>
</dbReference>
<dbReference type="EMBL" id="AB046826">
    <property type="protein sequence ID" value="BAB13432.1"/>
    <property type="molecule type" value="mRNA"/>
</dbReference>
<dbReference type="CCDS" id="CCDS1121.1">
    <molecule id="Q3T8J9-2"/>
</dbReference>
<dbReference type="CCDS" id="CCDS44242.1">
    <molecule id="Q3T8J9-3"/>
</dbReference>
<dbReference type="CCDS" id="CCDS60296.1">
    <molecule id="Q3T8J9-1"/>
</dbReference>
<dbReference type="RefSeq" id="NP_001269785.1">
    <molecule id="Q3T8J9-1"/>
    <property type="nucleotide sequence ID" value="NM_001282856.2"/>
</dbReference>
<dbReference type="RefSeq" id="NP_001269787.1">
    <molecule id="Q3T8J9-3"/>
    <property type="nucleotide sequence ID" value="NM_001282858.2"/>
</dbReference>
<dbReference type="RefSeq" id="NP_001269789.1">
    <molecule id="Q3T8J9-1"/>
    <property type="nucleotide sequence ID" value="NM_001282860.2"/>
</dbReference>
<dbReference type="RefSeq" id="NP_001269790.1">
    <molecule id="Q3T8J9-2"/>
    <property type="nucleotide sequence ID" value="NM_001282861.2"/>
</dbReference>
<dbReference type="RefSeq" id="NP_115668.4">
    <molecule id="Q3T8J9-2"/>
    <property type="nucleotide sequence ID" value="NM_032292.5"/>
</dbReference>
<dbReference type="RefSeq" id="XP_006711456.1">
    <molecule id="Q3T8J9-3"/>
    <property type="nucleotide sequence ID" value="XM_006711393.4"/>
</dbReference>
<dbReference type="RefSeq" id="XP_006711457.1">
    <molecule id="Q3T8J9-3"/>
    <property type="nucleotide sequence ID" value="XM_006711394.5"/>
</dbReference>
<dbReference type="RefSeq" id="XP_047279219.1">
    <molecule id="Q3T8J9-3"/>
    <property type="nucleotide sequence ID" value="XM_047423263.1"/>
</dbReference>
<dbReference type="RefSeq" id="XP_047279220.1">
    <molecule id="Q3T8J9-3"/>
    <property type="nucleotide sequence ID" value="XM_047423264.1"/>
</dbReference>
<dbReference type="RefSeq" id="XP_047279233.1">
    <molecule id="Q3T8J9-3"/>
    <property type="nucleotide sequence ID" value="XM_047423277.1"/>
</dbReference>
<dbReference type="RefSeq" id="XP_054193195.1">
    <molecule id="Q3T8J9-3"/>
    <property type="nucleotide sequence ID" value="XM_054337220.1"/>
</dbReference>
<dbReference type="RefSeq" id="XP_054193196.1">
    <molecule id="Q3T8J9-3"/>
    <property type="nucleotide sequence ID" value="XM_054337221.1"/>
</dbReference>
<dbReference type="SMR" id="Q3T8J9"/>
<dbReference type="BioGRID" id="120206">
    <property type="interactions" value="47"/>
</dbReference>
<dbReference type="FunCoup" id="Q3T8J9">
    <property type="interactions" value="3547"/>
</dbReference>
<dbReference type="IntAct" id="Q3T8J9">
    <property type="interactions" value="21"/>
</dbReference>
<dbReference type="MINT" id="Q3T8J9"/>
<dbReference type="STRING" id="9606.ENSP00000357315"/>
<dbReference type="GlyCosmos" id="Q3T8J9">
    <property type="glycosylation" value="1 site, 1 glycan"/>
</dbReference>
<dbReference type="GlyGen" id="Q3T8J9">
    <property type="glycosylation" value="1 site, 1 O-linked glycan (1 site)"/>
</dbReference>
<dbReference type="iPTMnet" id="Q3T8J9"/>
<dbReference type="MetOSite" id="Q3T8J9"/>
<dbReference type="PhosphoSitePlus" id="Q3T8J9"/>
<dbReference type="SwissPalm" id="Q3T8J9"/>
<dbReference type="BioMuta" id="GON4L"/>
<dbReference type="DMDM" id="84029264"/>
<dbReference type="jPOST" id="Q3T8J9"/>
<dbReference type="MassIVE" id="Q3T8J9"/>
<dbReference type="PaxDb" id="9606-ENSP00000357315"/>
<dbReference type="PeptideAtlas" id="Q3T8J9"/>
<dbReference type="ProteomicsDB" id="61875">
    <molecule id="Q3T8J9-1"/>
</dbReference>
<dbReference type="ProteomicsDB" id="61876">
    <molecule id="Q3T8J9-2"/>
</dbReference>
<dbReference type="ProteomicsDB" id="61877">
    <molecule id="Q3T8J9-3"/>
</dbReference>
<dbReference type="Pumba" id="Q3T8J9"/>
<dbReference type="Antibodypedia" id="77187">
    <property type="antibodies" value="19 antibodies from 10 providers"/>
</dbReference>
<dbReference type="DNASU" id="54856"/>
<dbReference type="Ensembl" id="ENST00000271883.9">
    <molecule id="Q3T8J9-3"/>
    <property type="protein sequence ID" value="ENSP00000271883.5"/>
    <property type="gene ID" value="ENSG00000116580.20"/>
</dbReference>
<dbReference type="Ensembl" id="ENST00000361040.9">
    <molecule id="Q3T8J9-2"/>
    <property type="protein sequence ID" value="ENSP00000354322.5"/>
    <property type="gene ID" value="ENSG00000116580.20"/>
</dbReference>
<dbReference type="Ensembl" id="ENST00000368331.6">
    <molecule id="Q3T8J9-1"/>
    <property type="protein sequence ID" value="ENSP00000357315.1"/>
    <property type="gene ID" value="ENSG00000116580.20"/>
</dbReference>
<dbReference type="Ensembl" id="ENST00000437809.5">
    <molecule id="Q3T8J9-3"/>
    <property type="protein sequence ID" value="ENSP00000396117.1"/>
    <property type="gene ID" value="ENSG00000116580.20"/>
</dbReference>
<dbReference type="Ensembl" id="ENST00000615926.4">
    <molecule id="Q3T8J9-1"/>
    <property type="protein sequence ID" value="ENSP00000483100.1"/>
    <property type="gene ID" value="ENSG00000116580.20"/>
</dbReference>
<dbReference type="Ensembl" id="ENST00000622608.2">
    <molecule id="Q3T8J9-2"/>
    <property type="protein sequence ID" value="ENSP00000478593.2"/>
    <property type="gene ID" value="ENSG00000116580.20"/>
</dbReference>
<dbReference type="GeneID" id="54856"/>
<dbReference type="KEGG" id="hsa:54856"/>
<dbReference type="MANE-Select" id="ENST00000368331.6">
    <property type="protein sequence ID" value="ENSP00000357315.1"/>
    <property type="RefSeq nucleotide sequence ID" value="NM_001282860.2"/>
    <property type="RefSeq protein sequence ID" value="NP_001269789.1"/>
</dbReference>
<dbReference type="UCSC" id="uc001flz.4">
    <molecule id="Q3T8J9-1"/>
    <property type="organism name" value="human"/>
</dbReference>
<dbReference type="AGR" id="HGNC:25973"/>
<dbReference type="CTD" id="54856"/>
<dbReference type="DisGeNET" id="54856"/>
<dbReference type="GeneCards" id="GON4L"/>
<dbReference type="HGNC" id="HGNC:25973">
    <property type="gene designation" value="GON4L"/>
</dbReference>
<dbReference type="HPA" id="ENSG00000116580">
    <property type="expression patterns" value="Low tissue specificity"/>
</dbReference>
<dbReference type="MalaCards" id="GON4L"/>
<dbReference type="MIM" id="610393">
    <property type="type" value="gene"/>
</dbReference>
<dbReference type="neXtProt" id="NX_Q3T8J9"/>
<dbReference type="OpenTargets" id="ENSG00000116580"/>
<dbReference type="PharmGKB" id="PA142671723"/>
<dbReference type="VEuPathDB" id="HostDB:ENSG00000116580"/>
<dbReference type="eggNOG" id="ENOG502QT2W">
    <property type="taxonomic scope" value="Eukaryota"/>
</dbReference>
<dbReference type="GeneTree" id="ENSGT00390000016256"/>
<dbReference type="HOGENOM" id="CLU_000833_0_0_1"/>
<dbReference type="InParanoid" id="Q3T8J9"/>
<dbReference type="OMA" id="HRNYKDC"/>
<dbReference type="OrthoDB" id="6257037at2759"/>
<dbReference type="PAN-GO" id="Q3T8J9">
    <property type="GO annotations" value="3 GO annotations based on evolutionary models"/>
</dbReference>
<dbReference type="PhylomeDB" id="Q3T8J9"/>
<dbReference type="TreeFam" id="TF343327"/>
<dbReference type="PathwayCommons" id="Q3T8J9"/>
<dbReference type="SignaLink" id="Q3T8J9"/>
<dbReference type="BioGRID-ORCS" id="54856">
    <property type="hits" value="127 hits in 1158 CRISPR screens"/>
</dbReference>
<dbReference type="ChiTaRS" id="GON4L">
    <property type="organism name" value="human"/>
</dbReference>
<dbReference type="GeneWiki" id="GON4L"/>
<dbReference type="GenomeRNAi" id="54856"/>
<dbReference type="Pharos" id="Q3T8J9">
    <property type="development level" value="Tbio"/>
</dbReference>
<dbReference type="PRO" id="PR:Q3T8J9"/>
<dbReference type="Proteomes" id="UP000005640">
    <property type="component" value="Chromosome 1"/>
</dbReference>
<dbReference type="RNAct" id="Q3T8J9">
    <property type="molecule type" value="protein"/>
</dbReference>
<dbReference type="Bgee" id="ENSG00000116580">
    <property type="expression patterns" value="Expressed in sural nerve and 170 other cell types or tissues"/>
</dbReference>
<dbReference type="ExpressionAtlas" id="Q3T8J9">
    <property type="expression patterns" value="baseline and differential"/>
</dbReference>
<dbReference type="GO" id="GO:0016604">
    <property type="term" value="C:nuclear body"/>
    <property type="evidence" value="ECO:0000314"/>
    <property type="project" value="HPA"/>
</dbReference>
<dbReference type="GO" id="GO:0005654">
    <property type="term" value="C:nucleoplasm"/>
    <property type="evidence" value="ECO:0000314"/>
    <property type="project" value="HPA"/>
</dbReference>
<dbReference type="GO" id="GO:0005634">
    <property type="term" value="C:nucleus"/>
    <property type="evidence" value="ECO:0000318"/>
    <property type="project" value="GO_Central"/>
</dbReference>
<dbReference type="GO" id="GO:0003712">
    <property type="term" value="F:transcription coregulator activity"/>
    <property type="evidence" value="ECO:0000318"/>
    <property type="project" value="GO_Central"/>
</dbReference>
<dbReference type="GO" id="GO:0006355">
    <property type="term" value="P:regulation of DNA-templated transcription"/>
    <property type="evidence" value="ECO:0000318"/>
    <property type="project" value="GO_Central"/>
</dbReference>
<dbReference type="CDD" id="cd12202">
    <property type="entry name" value="CASP8AP2"/>
    <property type="match status" value="1"/>
</dbReference>
<dbReference type="FunFam" id="1.10.10.60:FF:000191">
    <property type="entry name" value="GON-4-like protein isoform X1"/>
    <property type="match status" value="1"/>
</dbReference>
<dbReference type="FunFam" id="1.20.1160.11:FF:000006">
    <property type="entry name" value="GON-4-like protein isoform X1"/>
    <property type="match status" value="1"/>
</dbReference>
<dbReference type="Gene3D" id="1.10.10.60">
    <property type="entry name" value="Homeodomain-like"/>
    <property type="match status" value="1"/>
</dbReference>
<dbReference type="Gene3D" id="1.20.1160.11">
    <property type="entry name" value="Paired amphipathic helix"/>
    <property type="match status" value="1"/>
</dbReference>
<dbReference type="InterPro" id="IPR049257">
    <property type="entry name" value="Gon4l/CASP8AP2_myb-like"/>
</dbReference>
<dbReference type="InterPro" id="IPR009057">
    <property type="entry name" value="Homeodomain-like_sf"/>
</dbReference>
<dbReference type="InterPro" id="IPR003822">
    <property type="entry name" value="PAH"/>
</dbReference>
<dbReference type="InterPro" id="IPR036600">
    <property type="entry name" value="PAH_sf"/>
</dbReference>
<dbReference type="InterPro" id="IPR001005">
    <property type="entry name" value="SANT/Myb"/>
</dbReference>
<dbReference type="InterPro" id="IPR052435">
    <property type="entry name" value="YY1-Transcr_Regul"/>
</dbReference>
<dbReference type="PANTHER" id="PTHR16088:SF3">
    <property type="entry name" value="GON-4-LIKE PROTEIN"/>
    <property type="match status" value="1"/>
</dbReference>
<dbReference type="PANTHER" id="PTHR16088">
    <property type="entry name" value="YY1 ASSOCIATED PROTEIN-RELATED"/>
    <property type="match status" value="1"/>
</dbReference>
<dbReference type="Pfam" id="PF21227">
    <property type="entry name" value="Myb_DNA-binding_7"/>
    <property type="match status" value="1"/>
</dbReference>
<dbReference type="Pfam" id="PF02671">
    <property type="entry name" value="PAH"/>
    <property type="match status" value="2"/>
</dbReference>
<dbReference type="SUPFAM" id="SSF46689">
    <property type="entry name" value="Homeodomain-like"/>
    <property type="match status" value="1"/>
</dbReference>
<dbReference type="SUPFAM" id="SSF47762">
    <property type="entry name" value="PAH2 domain"/>
    <property type="match status" value="2"/>
</dbReference>
<dbReference type="PROSITE" id="PS50090">
    <property type="entry name" value="MYB_LIKE"/>
    <property type="match status" value="1"/>
</dbReference>
<dbReference type="PROSITE" id="PS51477">
    <property type="entry name" value="PAH"/>
    <property type="match status" value="2"/>
</dbReference>
<reference key="1">
    <citation type="submission" date="2003-07" db="EMBL/GenBank/DDBJ databases">
        <title>An anthropoid specific segmental duplication in the human chromosome 1q22: structure and evolution of the affected genes.</title>
        <authorList>
            <person name="Kuryshev V.Y."/>
            <person name="Vorobyov E."/>
            <person name="Zink D."/>
            <person name="Schmitz J."/>
            <person name="Rozhdestvensky T.S."/>
            <person name="Muenstermann E."/>
            <person name="Ernst U."/>
            <person name="Wellenreuther R."/>
            <person name="Moosmayer P."/>
            <person name="Bechtel S."/>
            <person name="Schupp I."/>
            <person name="Horst J."/>
            <person name="Korn B."/>
            <person name="Poustka A."/>
            <person name="Wiemann S."/>
        </authorList>
    </citation>
    <scope>NUCLEOTIDE SEQUENCE [MRNA] (ISOFORMS 1 AND 2)</scope>
</reference>
<reference key="2">
    <citation type="journal article" date="2001" name="Genome Res.">
        <title>Towards a catalog of human genes and proteins: sequencing and analysis of 500 novel complete protein coding human cDNAs.</title>
        <authorList>
            <person name="Wiemann S."/>
            <person name="Weil B."/>
            <person name="Wellenreuther R."/>
            <person name="Gassenhuber J."/>
            <person name="Glassl S."/>
            <person name="Ansorge W."/>
            <person name="Boecher M."/>
            <person name="Bloecker H."/>
            <person name="Bauersachs S."/>
            <person name="Blum H."/>
            <person name="Lauber J."/>
            <person name="Duesterhoeft A."/>
            <person name="Beyer A."/>
            <person name="Koehrer K."/>
            <person name="Strack N."/>
            <person name="Mewes H.-W."/>
            <person name="Ottenwaelder B."/>
            <person name="Obermaier B."/>
            <person name="Tampe J."/>
            <person name="Heubner D."/>
            <person name="Wambutt R."/>
            <person name="Korn B."/>
            <person name="Klein M."/>
            <person name="Poustka A."/>
        </authorList>
    </citation>
    <scope>NUCLEOTIDE SEQUENCE [LARGE SCALE MRNA] (ISOFORM 2)</scope>
    <scope>VARIANT VAL-1418</scope>
    <source>
        <tissue>Amygdala</tissue>
        <tissue>Esophageal carcinoma</tissue>
        <tissue>Retina</tissue>
    </source>
</reference>
<reference key="3">
    <citation type="journal article" date="2006" name="Nature">
        <title>The DNA sequence and biological annotation of human chromosome 1.</title>
        <authorList>
            <person name="Gregory S.G."/>
            <person name="Barlow K.F."/>
            <person name="McLay K.E."/>
            <person name="Kaul R."/>
            <person name="Swarbreck D."/>
            <person name="Dunham A."/>
            <person name="Scott C.E."/>
            <person name="Howe K.L."/>
            <person name="Woodfine K."/>
            <person name="Spencer C.C.A."/>
            <person name="Jones M.C."/>
            <person name="Gillson C."/>
            <person name="Searle S."/>
            <person name="Zhou Y."/>
            <person name="Kokocinski F."/>
            <person name="McDonald L."/>
            <person name="Evans R."/>
            <person name="Phillips K."/>
            <person name="Atkinson A."/>
            <person name="Cooper R."/>
            <person name="Jones C."/>
            <person name="Hall R.E."/>
            <person name="Andrews T.D."/>
            <person name="Lloyd C."/>
            <person name="Ainscough R."/>
            <person name="Almeida J.P."/>
            <person name="Ambrose K.D."/>
            <person name="Anderson F."/>
            <person name="Andrew R.W."/>
            <person name="Ashwell R.I.S."/>
            <person name="Aubin K."/>
            <person name="Babbage A.K."/>
            <person name="Bagguley C.L."/>
            <person name="Bailey J."/>
            <person name="Beasley H."/>
            <person name="Bethel G."/>
            <person name="Bird C.P."/>
            <person name="Bray-Allen S."/>
            <person name="Brown J.Y."/>
            <person name="Brown A.J."/>
            <person name="Buckley D."/>
            <person name="Burton J."/>
            <person name="Bye J."/>
            <person name="Carder C."/>
            <person name="Chapman J.C."/>
            <person name="Clark S.Y."/>
            <person name="Clarke G."/>
            <person name="Clee C."/>
            <person name="Cobley V."/>
            <person name="Collier R.E."/>
            <person name="Corby N."/>
            <person name="Coville G.J."/>
            <person name="Davies J."/>
            <person name="Deadman R."/>
            <person name="Dunn M."/>
            <person name="Earthrowl M."/>
            <person name="Ellington A.G."/>
            <person name="Errington H."/>
            <person name="Frankish A."/>
            <person name="Frankland J."/>
            <person name="French L."/>
            <person name="Garner P."/>
            <person name="Garnett J."/>
            <person name="Gay L."/>
            <person name="Ghori M.R.J."/>
            <person name="Gibson R."/>
            <person name="Gilby L.M."/>
            <person name="Gillett W."/>
            <person name="Glithero R.J."/>
            <person name="Grafham D.V."/>
            <person name="Griffiths C."/>
            <person name="Griffiths-Jones S."/>
            <person name="Grocock R."/>
            <person name="Hammond S."/>
            <person name="Harrison E.S.I."/>
            <person name="Hart E."/>
            <person name="Haugen E."/>
            <person name="Heath P.D."/>
            <person name="Holmes S."/>
            <person name="Holt K."/>
            <person name="Howden P.J."/>
            <person name="Hunt A.R."/>
            <person name="Hunt S.E."/>
            <person name="Hunter G."/>
            <person name="Isherwood J."/>
            <person name="James R."/>
            <person name="Johnson C."/>
            <person name="Johnson D."/>
            <person name="Joy A."/>
            <person name="Kay M."/>
            <person name="Kershaw J.K."/>
            <person name="Kibukawa M."/>
            <person name="Kimberley A.M."/>
            <person name="King A."/>
            <person name="Knights A.J."/>
            <person name="Lad H."/>
            <person name="Laird G."/>
            <person name="Lawlor S."/>
            <person name="Leongamornlert D.A."/>
            <person name="Lloyd D.M."/>
            <person name="Loveland J."/>
            <person name="Lovell J."/>
            <person name="Lush M.J."/>
            <person name="Lyne R."/>
            <person name="Martin S."/>
            <person name="Mashreghi-Mohammadi M."/>
            <person name="Matthews L."/>
            <person name="Matthews N.S.W."/>
            <person name="McLaren S."/>
            <person name="Milne S."/>
            <person name="Mistry S."/>
            <person name="Moore M.J.F."/>
            <person name="Nickerson T."/>
            <person name="O'Dell C.N."/>
            <person name="Oliver K."/>
            <person name="Palmeiri A."/>
            <person name="Palmer S.A."/>
            <person name="Parker A."/>
            <person name="Patel D."/>
            <person name="Pearce A.V."/>
            <person name="Peck A.I."/>
            <person name="Pelan S."/>
            <person name="Phelps K."/>
            <person name="Phillimore B.J."/>
            <person name="Plumb R."/>
            <person name="Rajan J."/>
            <person name="Raymond C."/>
            <person name="Rouse G."/>
            <person name="Saenphimmachak C."/>
            <person name="Sehra H.K."/>
            <person name="Sheridan E."/>
            <person name="Shownkeen R."/>
            <person name="Sims S."/>
            <person name="Skuce C.D."/>
            <person name="Smith M."/>
            <person name="Steward C."/>
            <person name="Subramanian S."/>
            <person name="Sycamore N."/>
            <person name="Tracey A."/>
            <person name="Tromans A."/>
            <person name="Van Helmond Z."/>
            <person name="Wall M."/>
            <person name="Wallis J.M."/>
            <person name="White S."/>
            <person name="Whitehead S.L."/>
            <person name="Wilkinson J.E."/>
            <person name="Willey D.L."/>
            <person name="Williams H."/>
            <person name="Wilming L."/>
            <person name="Wray P.W."/>
            <person name="Wu Z."/>
            <person name="Coulson A."/>
            <person name="Vaudin M."/>
            <person name="Sulston J.E."/>
            <person name="Durbin R.M."/>
            <person name="Hubbard T."/>
            <person name="Wooster R."/>
            <person name="Dunham I."/>
            <person name="Carter N.P."/>
            <person name="McVean G."/>
            <person name="Ross M.T."/>
            <person name="Harrow J."/>
            <person name="Olson M.V."/>
            <person name="Beck S."/>
            <person name="Rogers J."/>
            <person name="Bentley D.R."/>
        </authorList>
    </citation>
    <scope>NUCLEOTIDE SEQUENCE [LARGE SCALE GENOMIC DNA]</scope>
</reference>
<reference key="4">
    <citation type="submission" date="2005-09" db="EMBL/GenBank/DDBJ databases">
        <authorList>
            <person name="Mural R.J."/>
            <person name="Istrail S."/>
            <person name="Sutton G.G."/>
            <person name="Florea L."/>
            <person name="Halpern A.L."/>
            <person name="Mobarry C.M."/>
            <person name="Lippert R."/>
            <person name="Walenz B."/>
            <person name="Shatkay H."/>
            <person name="Dew I."/>
            <person name="Miller J.R."/>
            <person name="Flanigan M.J."/>
            <person name="Edwards N.J."/>
            <person name="Bolanos R."/>
            <person name="Fasulo D."/>
            <person name="Halldorsson B.V."/>
            <person name="Hannenhalli S."/>
            <person name="Turner R."/>
            <person name="Yooseph S."/>
            <person name="Lu F."/>
            <person name="Nusskern D.R."/>
            <person name="Shue B.C."/>
            <person name="Zheng X.H."/>
            <person name="Zhong F."/>
            <person name="Delcher A.L."/>
            <person name="Huson D.H."/>
            <person name="Kravitz S.A."/>
            <person name="Mouchard L."/>
            <person name="Reinert K."/>
            <person name="Remington K.A."/>
            <person name="Clark A.G."/>
            <person name="Waterman M.S."/>
            <person name="Eichler E.E."/>
            <person name="Adams M.D."/>
            <person name="Hunkapiller M.W."/>
            <person name="Myers E.W."/>
            <person name="Venter J.C."/>
        </authorList>
    </citation>
    <scope>NUCLEOTIDE SEQUENCE [LARGE SCALE GENOMIC DNA]</scope>
</reference>
<reference key="5">
    <citation type="journal article" date="2004" name="Genome Res.">
        <title>The status, quality, and expansion of the NIH full-length cDNA project: the Mammalian Gene Collection (MGC).</title>
        <authorList>
            <consortium name="The MGC Project Team"/>
        </authorList>
    </citation>
    <scope>NUCLEOTIDE SEQUENCE [LARGE SCALE MRNA] (ISOFORM 2)</scope>
    <scope>NUCLEOTIDE SEQUENCE [LARGE SCALE MRNA] OF 1522-2241 (ISOFORM 3)</scope>
    <source>
        <tissue>Duodenum</tissue>
        <tissue>Skin</tissue>
    </source>
</reference>
<reference key="6">
    <citation type="journal article" date="2000" name="DNA Res.">
        <title>Prediction of the coding sequences of unidentified human genes. XVIII. The complete sequences of 100 new cDNA clones from brain which code for large proteins in vitro.</title>
        <authorList>
            <person name="Nagase T."/>
            <person name="Kikuno R."/>
            <person name="Nakayama M."/>
            <person name="Hirosawa M."/>
            <person name="Ohara O."/>
        </authorList>
    </citation>
    <scope>NUCLEOTIDE SEQUENCE [LARGE SCALE MRNA] OF 1146-2241 (ISOFORM 3)</scope>
</reference>
<reference key="7">
    <citation type="journal article" date="2009" name="Anal. Chem.">
        <title>Lys-N and trypsin cover complementary parts of the phosphoproteome in a refined SCX-based approach.</title>
        <authorList>
            <person name="Gauci S."/>
            <person name="Helbig A.O."/>
            <person name="Slijper M."/>
            <person name="Krijgsveld J."/>
            <person name="Heck A.J."/>
            <person name="Mohammed S."/>
        </authorList>
    </citation>
    <scope>IDENTIFICATION BY MASS SPECTROMETRY [LARGE SCALE ANALYSIS]</scope>
</reference>
<reference key="8">
    <citation type="journal article" date="2011" name="Sci. Signal.">
        <title>System-wide temporal characterization of the proteome and phosphoproteome of human embryonic stem cell differentiation.</title>
        <authorList>
            <person name="Rigbolt K.T."/>
            <person name="Prokhorova T.A."/>
            <person name="Akimov V."/>
            <person name="Henningsen J."/>
            <person name="Johansen P.T."/>
            <person name="Kratchmarova I."/>
            <person name="Kassem M."/>
            <person name="Mann M."/>
            <person name="Olsen J.V."/>
            <person name="Blagoev B."/>
        </authorList>
    </citation>
    <scope>PHOSPHORYLATION [LARGE SCALE ANALYSIS] AT SER-346</scope>
    <scope>IDENTIFICATION BY MASS SPECTROMETRY [LARGE SCALE ANALYSIS]</scope>
</reference>
<reference key="9">
    <citation type="journal article" date="2013" name="J. Proteome Res.">
        <title>Toward a comprehensive characterization of a human cancer cell phosphoproteome.</title>
        <authorList>
            <person name="Zhou H."/>
            <person name="Di Palma S."/>
            <person name="Preisinger C."/>
            <person name="Peng M."/>
            <person name="Polat A.N."/>
            <person name="Heck A.J."/>
            <person name="Mohammed S."/>
        </authorList>
    </citation>
    <scope>PHOSPHORYLATION [LARGE SCALE ANALYSIS] AT SER-206; SER-346; SER-1268; SER-1426; SER-1896; SER-1902; SER-1977 AND SER-2107</scope>
    <scope>IDENTIFICATION BY MASS SPECTROMETRY [LARGE SCALE ANALYSIS]</scope>
    <source>
        <tissue>Cervix carcinoma</tissue>
        <tissue>Erythroleukemia</tissue>
    </source>
</reference>
<sequence>MLPCKKRRTTVTESLQHKGNQEENNVDLESAVKPESDQVKDLSSVSLSWDPSHGRVAGFEVQSLQDAGNQLGMEDTSLSSGMLTQNTNVPILEGVDVAISQGITLPSLESFHPLNIHIGKGKLHATGSKRGKKMTLRPGPVTQEDRCDHLTLKEPFSGEPSEEVKEEGGKPQMNSEGEIPSLPSGSQSAKPVSQPRKSTQPDVCASPQEKPLRTLFHQPEEEIEDGGLFIPMEEQDNEESEKRRKKKKGTKRKRDGRGQEGTLAYDLKLDDMLDRTLEDGAKQHNLTAVNVRNILHEVITNEHVVAMMKAAISETEDMPMFEPKMTRSKLKEVVEKGVVIPTWNISPIKKANEIKPPQFVDIHLEEDDSSDEEYQPDDEEEDETAEESLLESDVESTASSPRGAKKSRLRQSSEMTETDEESGILSEAEKVTTPAIRHISAEVVPMGPPPPPKPKQTRDSTFMEKLHAVDEELASSPVCMDSFQPMDDSLIAFRTRSKMPLKDVPLGQLEAELQAPDITPDMYDPNTADDEDWKMWLGGLMNDDVGNEDEADDDDDPEYNFLEDLDEPDTEDFRTDRAVRITKKEVNELMEELFETFQDEMGFSNMEDDGPEEEECVAEPRPNFNTPQALRFEEPLANLLNEQHRTVKELFEQLKMKKSSAKQLQEVEKVKPQSEKVHQTLILDPAQRKRLQQQMQQHVQLLTQIHLLATCNPNLNPEATTTRIFLKELGTFAQSSIALHHQYNPKFQTLFQPCNLMGAMQLIEDFSTHVSIDCSPHKTVKKTANEFPCLPKQVAWILATSKVFMYPELLPVCSLKAKNPQDKIVFTKAEDNLLALGLKHFEGTEFPNPLISKYLLTCKTAHQLTVRIKNLNMNRAPDNIIKFYKKTKQLPVLGKCCEEIQPHQWKPPIEREEHRLPFWLKASLPSIQEELRHMADGAREVGNMTGTTEINSDRSLEKDNLELGSESRYPLLLPKGVVLKLKPVATRFPRKAWRQKRSSVLKPLLIQPSPSLQPSFNPGKTPARSTHSEAPPSKMVLRIPHPIQPATVLQTVPGVPPLGVSGGESFESPAALPAVPPEARTSFPLSESQTLLSSAPVPKVMLPSLAPSKFRKPYVRRRPSKRRGVKASPCMKPAPVIHHPASVIFTVPATTVKIVSLGGGCNMIQPVNAAVAQSPQTIPITTLLVNPTSFPCPLNQSLVASSVSPLIVSGNSVNLPIPSTPEDKAHVNVDIACAVADGENAFQGLEPKLEPQELSPLSATVFPKVEHSPGPPLADAECQEGLSENSACRWTVVKTEEGRQALEPLPQGIQESLNNPTPGDLEEIVKMEPEEAREEISGSPERDICDDIKVEHAVELDTGAPSEELSSAGEVTKQTVLQKEEERSQPTKTPSSSQEPPDEGTSGTDVNKGSSKNALSSMDPEVRLSSPPGKPEDSSSVDGQSVGTPVGPETGGEKNGPEEEEEEDFDDLTQDEEDEMSSASEESVLSVPELQETMEKLTWLASERRMSQEGESEEENSQEENSEPEEEEEEEAEGMESLQKEDEMTDEAVGDSAEKPPTFASPETAPEVETSRTPPGESIKAAGKGRNNHRARNKRGSRARASKDTSKLLLLYDEDILERDPLREQKDLAFAQAYLTRVREALQHIPGKYEDFLQVIYEFESSTQRRTAVDLYKSLQILLQDWPQLLKDFAAFLLPEQALACGLFEEQQAFEKSRKFLRQLEICFAENPSHHQKIIKVLQGCADCLPQEITELKTQMWQLLKGHDHLQDEFSIFFDHLRPAASRMGDFEEINWTEEKEYEFDGFEEVALPDVEEEEEPPKIPTASKNKRKKEIGVQNHDKETEWPDGAKDCACSCHEGGPDSKLKKSKRRSCSHCSSKVCDSKSYKSKEPHELVGSSPHREASPMPGAKEAGQGKDMMEEEAPEERESTEATQSRTVRTTRKGEMPVSAGLAVGSTLPSPREVTVTERLLLDGPPPHSPETPQFPPTTGAVLYTVKRNQVGPEVRSCPKASPRLQKEREGQKAVSESEALMLVWDASETEKLPGTVEPPASFLSPVSSKTRDAGRRHVSGKPDTQERWLPSSRARVKTRDRTCPVHESPSGIDTSETSPKAPRGGLAKDSGTQAKGPEGEQQPKAAEATVCANNSKVSSTGEKVVLWTREADRVILTMCQEQGAQPQTFNIISQQLGNKTPAEVSHRFRELMQLFHTACEASSEDEDDATSTSNADQLSDHGDLLSEEELDE</sequence>
<accession>Q3T8J9</accession>
<accession>B7ZBL4</accession>
<accession>Q14C93</accession>
<accession>Q3T8J8</accession>
<accession>Q5VYZ5</accession>
<accession>Q5W0D5</accession>
<accession>Q6AWA6</accession>
<accession>Q6P1Q6</accession>
<accession>Q7Z3L3</accession>
<accession>Q8IY79</accession>
<accession>Q9BQI1</accession>
<accession>Q9HCG6</accession>
<proteinExistence type="evidence at protein level"/>
<evidence type="ECO:0000250" key="1">
    <source>
        <dbReference type="UniProtKB" id="Q9DB00"/>
    </source>
</evidence>
<evidence type="ECO:0000255" key="2">
    <source>
        <dbReference type="PROSITE-ProRule" id="PRU00133"/>
    </source>
</evidence>
<evidence type="ECO:0000255" key="3">
    <source>
        <dbReference type="PROSITE-ProRule" id="PRU00810"/>
    </source>
</evidence>
<evidence type="ECO:0000256" key="4">
    <source>
        <dbReference type="SAM" id="MobiDB-lite"/>
    </source>
</evidence>
<evidence type="ECO:0000269" key="5">
    <source>
    </source>
</evidence>
<evidence type="ECO:0000303" key="6">
    <source>
    </source>
</evidence>
<evidence type="ECO:0000303" key="7">
    <source>
    </source>
</evidence>
<evidence type="ECO:0000303" key="8">
    <source>
    </source>
</evidence>
<evidence type="ECO:0000303" key="9">
    <source ref="1"/>
</evidence>
<evidence type="ECO:0000305" key="10"/>
<evidence type="ECO:0007744" key="11">
    <source>
    </source>
</evidence>
<evidence type="ECO:0007744" key="12">
    <source>
    </source>
</evidence>
<gene>
    <name type="primary">GON4L</name>
    <name type="synonym">GON4</name>
    <name type="synonym">KIAA1606</name>
</gene>
<comment type="function">
    <text evidence="1">Has transcriptional repressor activity, probably as part of a complex with YY1, SIN3A and HDAC1. Required for B cell lymphopoiesis.</text>
</comment>
<comment type="subunit">
    <text evidence="1">Found in a complex with YY1, SIN3A and HDAC1.</text>
</comment>
<comment type="subcellular location">
    <subcellularLocation>
        <location evidence="3">Nucleus</location>
    </subcellularLocation>
</comment>
<comment type="alternative products">
    <event type="alternative splicing"/>
    <isoform>
        <id>Q3T8J9-1</id>
        <name>1</name>
        <name>Isoform A</name>
        <sequence type="displayed"/>
    </isoform>
    <isoform>
        <id>Q3T8J9-2</id>
        <name>2</name>
        <name>Isoform B</name>
        <sequence type="described" ref="VSP_016580 VSP_016581"/>
    </isoform>
    <isoform>
        <id>Q3T8J9-3</id>
        <name>3</name>
        <sequence type="described" ref="VSP_016582"/>
    </isoform>
</comment>
<comment type="sequence caution" evidence="10">
    <conflict type="erroneous initiation">
        <sequence resource="EMBL-CDS" id="CAD97829"/>
    </conflict>
    <text>Extended N-terminus.</text>
</comment>
<comment type="sequence caution" evidence="10">
    <conflict type="erroneous termination">
        <sequence resource="EMBL-CDS" id="CAH10549"/>
    </conflict>
    <text>Truncated C-terminus.</text>
</comment>
<comment type="online information" name="Wikipedia">
    <link uri="https://en.wikipedia.org/wiki/GON4L"/>
    <text>GON4L entry</text>
</comment>
<keyword id="KW-0025">Alternative splicing</keyword>
<keyword id="KW-0539">Nucleus</keyword>
<keyword id="KW-0597">Phosphoprotein</keyword>
<keyword id="KW-1267">Proteomics identification</keyword>
<keyword id="KW-1185">Reference proteome</keyword>
<keyword id="KW-0677">Repeat</keyword>
<keyword id="KW-0678">Repressor</keyword>
<keyword id="KW-0804">Transcription</keyword>
<keyword id="KW-0805">Transcription regulation</keyword>
<organism>
    <name type="scientific">Homo sapiens</name>
    <name type="common">Human</name>
    <dbReference type="NCBI Taxonomy" id="9606"/>
    <lineage>
        <taxon>Eukaryota</taxon>
        <taxon>Metazoa</taxon>
        <taxon>Chordata</taxon>
        <taxon>Craniata</taxon>
        <taxon>Vertebrata</taxon>
        <taxon>Euteleostomi</taxon>
        <taxon>Mammalia</taxon>
        <taxon>Eutheria</taxon>
        <taxon>Euarchontoglires</taxon>
        <taxon>Primates</taxon>
        <taxon>Haplorrhini</taxon>
        <taxon>Catarrhini</taxon>
        <taxon>Hominidae</taxon>
        <taxon>Homo</taxon>
    </lineage>
</organism>
<protein>
    <recommendedName>
        <fullName>GON-4-like protein</fullName>
    </recommendedName>
    <alternativeName>
        <fullName>GON-4 homolog</fullName>
    </alternativeName>
</protein>
<name>GON4L_HUMAN</name>
<feature type="chain" id="PRO_0000197109" description="GON-4-like protein">
    <location>
        <begin position="1"/>
        <end position="2241"/>
    </location>
</feature>
<feature type="domain" description="PAH 1" evidence="3">
    <location>
        <begin position="1624"/>
        <end position="1696"/>
    </location>
</feature>
<feature type="domain" description="PAH 2" evidence="3">
    <location>
        <begin position="1706"/>
        <end position="1777"/>
    </location>
</feature>
<feature type="domain" description="Myb-like" evidence="2">
    <location>
        <begin position="2148"/>
        <end position="2201"/>
    </location>
</feature>
<feature type="region of interest" description="Disordered" evidence="4">
    <location>
        <begin position="1"/>
        <end position="46"/>
    </location>
</feature>
<feature type="region of interest" description="Disordered" evidence="4">
    <location>
        <begin position="122"/>
        <end position="259"/>
    </location>
</feature>
<feature type="region of interest" description="Disordered" evidence="4">
    <location>
        <begin position="366"/>
        <end position="460"/>
    </location>
</feature>
<feature type="region of interest" description="Required for interaction with YY1, SIN3A and HDAC1, and transcriptional repression activity" evidence="1">
    <location>
        <begin position="600"/>
        <end position="1339"/>
    </location>
</feature>
<feature type="region of interest" description="Disordered" evidence="4">
    <location>
        <begin position="1008"/>
        <end position="1031"/>
    </location>
</feature>
<feature type="region of interest" description="Disordered" evidence="4">
    <location>
        <begin position="1111"/>
        <end position="1131"/>
    </location>
</feature>
<feature type="region of interest" description="Disordered" evidence="4">
    <location>
        <begin position="1301"/>
        <end position="1320"/>
    </location>
</feature>
<feature type="region of interest" description="Disordered" evidence="4">
    <location>
        <begin position="1356"/>
        <end position="1601"/>
    </location>
</feature>
<feature type="region of interest" description="Disordered" evidence="4">
    <location>
        <begin position="1809"/>
        <end position="1960"/>
    </location>
</feature>
<feature type="region of interest" description="Disordered" evidence="4">
    <location>
        <begin position="2002"/>
        <end position="2025"/>
    </location>
</feature>
<feature type="region of interest" description="Disordered" evidence="4">
    <location>
        <begin position="2039"/>
        <end position="2149"/>
    </location>
</feature>
<feature type="region of interest" description="Disordered" evidence="4">
    <location>
        <begin position="2208"/>
        <end position="2241"/>
    </location>
</feature>
<feature type="compositionally biased region" description="Basic and acidic residues" evidence="4">
    <location>
        <begin position="30"/>
        <end position="40"/>
    </location>
</feature>
<feature type="compositionally biased region" description="Basic residues" evidence="4">
    <location>
        <begin position="122"/>
        <end position="135"/>
    </location>
</feature>
<feature type="compositionally biased region" description="Basic and acidic residues" evidence="4">
    <location>
        <begin position="143"/>
        <end position="152"/>
    </location>
</feature>
<feature type="compositionally biased region" description="Polar residues" evidence="4">
    <location>
        <begin position="183"/>
        <end position="201"/>
    </location>
</feature>
<feature type="compositionally biased region" description="Basic residues" evidence="4">
    <location>
        <begin position="243"/>
        <end position="255"/>
    </location>
</feature>
<feature type="compositionally biased region" description="Acidic residues" evidence="4">
    <location>
        <begin position="366"/>
        <end position="394"/>
    </location>
</feature>
<feature type="compositionally biased region" description="Basic residues" evidence="4">
    <location>
        <begin position="1111"/>
        <end position="1125"/>
    </location>
</feature>
<feature type="compositionally biased region" description="Polar residues" evidence="4">
    <location>
        <begin position="1386"/>
        <end position="1416"/>
    </location>
</feature>
<feature type="compositionally biased region" description="Polar residues" evidence="4">
    <location>
        <begin position="1434"/>
        <end position="1443"/>
    </location>
</feature>
<feature type="compositionally biased region" description="Acidic residues" evidence="4">
    <location>
        <begin position="1458"/>
        <end position="1476"/>
    </location>
</feature>
<feature type="compositionally biased region" description="Acidic residues" evidence="4">
    <location>
        <begin position="1510"/>
        <end position="1534"/>
    </location>
</feature>
<feature type="compositionally biased region" description="Basic residues" evidence="4">
    <location>
        <begin position="1586"/>
        <end position="1600"/>
    </location>
</feature>
<feature type="compositionally biased region" description="Basic and acidic residues" evidence="4">
    <location>
        <begin position="1836"/>
        <end position="1848"/>
    </location>
</feature>
<feature type="compositionally biased region" description="Basic and acidic residues" evidence="4">
    <location>
        <begin position="1879"/>
        <end position="1901"/>
    </location>
</feature>
<feature type="compositionally biased region" description="Polar residues" evidence="4">
    <location>
        <begin position="2140"/>
        <end position="2149"/>
    </location>
</feature>
<feature type="modified residue" description="Phosphoserine" evidence="12">
    <location>
        <position position="206"/>
    </location>
</feature>
<feature type="modified residue" description="Phosphoserine" evidence="11 12">
    <location>
        <position position="346"/>
    </location>
</feature>
<feature type="modified residue" description="Phosphoserine" evidence="1">
    <location>
        <position position="775"/>
    </location>
</feature>
<feature type="modified residue" description="Phosphoserine" evidence="12">
    <location>
        <position position="1268"/>
    </location>
</feature>
<feature type="modified residue" description="Phosphoserine" evidence="12">
    <location>
        <position position="1426"/>
    </location>
</feature>
<feature type="modified residue" description="Phosphoserine" evidence="12">
    <location>
        <position position="1896"/>
    </location>
</feature>
<feature type="modified residue" description="Phosphoserine" evidence="12">
    <location>
        <position position="1902"/>
    </location>
</feature>
<feature type="modified residue" description="Phosphoserine" evidence="12">
    <location>
        <position position="1977"/>
    </location>
</feature>
<feature type="modified residue" description="Phosphoserine" evidence="12">
    <location>
        <position position="2107"/>
    </location>
</feature>
<feature type="splice variant" id="VSP_016580" description="In isoform 2." evidence="7 8 9">
    <original>ETMEKLTWLASERRMSQEGESEEENSQEENSEPEEEEE</original>
    <variation>VRAGEYSQVFRGLSNMYHLLICHLLACCTMDSPKIICI</variation>
    <location>
        <begin position="1492"/>
        <end position="1529"/>
    </location>
</feature>
<feature type="splice variant" id="VSP_016581" description="In isoform 2." evidence="7 8 9">
    <location>
        <begin position="1530"/>
        <end position="2241"/>
    </location>
</feature>
<feature type="splice variant" id="VSP_016582" description="In isoform 3." evidence="6 8">
    <location>
        <position position="1948"/>
    </location>
</feature>
<feature type="sequence variant" id="VAR_056169" description="In dbSNP:rs3738586.">
    <original>L</original>
    <variation>F</variation>
    <location>
        <position position="150"/>
    </location>
</feature>
<feature type="sequence variant" id="VAR_056170" description="In dbSNP:rs34939643.">
    <original>T</original>
    <variation>A</variation>
    <location>
        <position position="416"/>
    </location>
</feature>
<feature type="sequence variant" id="VAR_056171" description="In dbSNP:rs676814.">
    <original>S</original>
    <variation>P</variation>
    <location>
        <position position="1197"/>
    </location>
</feature>
<feature type="sequence variant" id="VAR_024320" description="In dbSNP:rs2297775." evidence="5">
    <original>M</original>
    <variation>V</variation>
    <location>
        <position position="1418"/>
    </location>
</feature>
<feature type="sequence variant" id="VAR_056172" description="In dbSNP:rs607790.">
    <original>Q</original>
    <variation>E</variation>
    <location>
        <position position="1539"/>
    </location>
</feature>
<feature type="sequence conflict" description="In Ref. 1; AAR01262 and 2; CAD97829." evidence="10" ref="1 2">
    <original>T</original>
    <variation>A</variation>
    <location>
        <position position="433"/>
    </location>
</feature>
<feature type="sequence conflict" description="In Ref. 2; CAH10549." evidence="10" ref="2">
    <original>T</original>
    <variation>A</variation>
    <location>
        <position position="626"/>
    </location>
</feature>
<feature type="sequence conflict" description="In Ref. 1; AAR01262 and 2; CAD97829." evidence="10" ref="1 2">
    <original>F</original>
    <variation>S</variation>
    <location>
        <position position="988"/>
    </location>
</feature>
<feature type="sequence conflict" description="In Ref. 2; CAH10549." evidence="10" ref="2">
    <original>T</original>
    <variation>S</variation>
    <location>
        <position position="1150"/>
    </location>
</feature>
<feature type="sequence conflict" description="In Ref. 2; CAH10549." evidence="10" ref="2">
    <original>R</original>
    <variation>G</variation>
    <location>
        <position position="1299"/>
    </location>
</feature>
<feature type="sequence conflict" description="In Ref. 1; AAR01262 and 2; CAD97829." evidence="10" ref="1 2">
    <original>E</original>
    <variation>G</variation>
    <location>
        <position position="1382"/>
    </location>
</feature>